<feature type="initiator methionine" description="Removed">
    <location>
        <position position="1"/>
    </location>
</feature>
<feature type="chain" id="PRO_0000140909" description="Thymidylate synthase">
    <location>
        <begin position="2"/>
        <end position="315"/>
    </location>
</feature>
<feature type="active site" description="Nucleophile" evidence="1">
    <location>
        <position position="176"/>
    </location>
</feature>
<feature type="binding site" description="in other chain" evidence="1">
    <location>
        <position position="29"/>
    </location>
    <ligand>
        <name>dUMP</name>
        <dbReference type="ChEBI" id="CHEBI:246422"/>
        <note>ligand shared between dimeric partners</note>
    </ligand>
</feature>
<feature type="binding site" evidence="1">
    <location>
        <begin position="156"/>
        <end position="157"/>
    </location>
    <ligand>
        <name>dUMP</name>
        <dbReference type="ChEBI" id="CHEBI:246422"/>
        <note>ligand shared between dimeric partners</note>
    </ligand>
</feature>
<feature type="binding site" description="in other chain" evidence="1">
    <location>
        <begin position="213"/>
        <end position="216"/>
    </location>
    <ligand>
        <name>dUMP</name>
        <dbReference type="ChEBI" id="CHEBI:246422"/>
        <note>ligand shared between dimeric partners</note>
    </ligand>
</feature>
<feature type="binding site" evidence="1">
    <location>
        <position position="216"/>
    </location>
    <ligand>
        <name>(6R)-5,10-methylene-5,6,7,8-tetrahydrofolate</name>
        <dbReference type="ChEBI" id="CHEBI:15636"/>
    </ligand>
</feature>
<feature type="binding site" description="in other chain" evidence="1">
    <location>
        <position position="224"/>
    </location>
    <ligand>
        <name>dUMP</name>
        <dbReference type="ChEBI" id="CHEBI:246422"/>
        <note>ligand shared between dimeric partners</note>
    </ligand>
</feature>
<feature type="binding site" description="in other chain" evidence="1">
    <location>
        <begin position="254"/>
        <end position="256"/>
    </location>
    <ligand>
        <name>dUMP</name>
        <dbReference type="ChEBI" id="CHEBI:246422"/>
        <note>ligand shared between dimeric partners</note>
    </ligand>
</feature>
<gene>
    <name type="primary">TMP1</name>
    <name type="synonym">CDC21</name>
    <name type="synonym">TSA1</name>
    <name type="ordered locus">CAALFM_C205190WA</name>
    <name type="ORF">CaO19.11033</name>
    <name type="ORF">CaO19.3549</name>
</gene>
<proteinExistence type="inferred from homology"/>
<accession>P12461</accession>
<accession>A0A1D8PHC1</accession>
<accession>Q59ZH0</accession>
<evidence type="ECO:0000250" key="1">
    <source>
        <dbReference type="UniProtKB" id="P0A884"/>
    </source>
</evidence>
<evidence type="ECO:0000305" key="2"/>
<comment type="catalytic activity">
    <reaction>
        <text>dUMP + (6R)-5,10-methylene-5,6,7,8-tetrahydrofolate = 7,8-dihydrofolate + dTMP</text>
        <dbReference type="Rhea" id="RHEA:12104"/>
        <dbReference type="ChEBI" id="CHEBI:15636"/>
        <dbReference type="ChEBI" id="CHEBI:57451"/>
        <dbReference type="ChEBI" id="CHEBI:63528"/>
        <dbReference type="ChEBI" id="CHEBI:246422"/>
        <dbReference type="EC" id="2.1.1.45"/>
    </reaction>
</comment>
<comment type="pathway">
    <text>Pyrimidine metabolism; dTTP biosynthesis.</text>
</comment>
<comment type="subunit">
    <text>Homodimer.</text>
</comment>
<comment type="similarity">
    <text evidence="2">Belongs to the thymidylate synthase family.</text>
</comment>
<reference key="1">
    <citation type="journal article" date="1989" name="J. Bacteriol.">
        <title>Cloning, purification, and properties of Candida albicans thymidylate synthase.</title>
        <authorList>
            <person name="Singer S.C."/>
            <person name="Richards C.A."/>
            <person name="Ferone R."/>
            <person name="Benedict D."/>
            <person name="Ray P."/>
        </authorList>
    </citation>
    <scope>NUCLEOTIDE SEQUENCE [GENOMIC DNA]</scope>
    <source>
        <strain>ATCC 11651 / B792 / 171D</strain>
    </source>
</reference>
<reference key="2">
    <citation type="journal article" date="2004" name="Proc. Natl. Acad. Sci. U.S.A.">
        <title>The diploid genome sequence of Candida albicans.</title>
        <authorList>
            <person name="Jones T."/>
            <person name="Federspiel N.A."/>
            <person name="Chibana H."/>
            <person name="Dungan J."/>
            <person name="Kalman S."/>
            <person name="Magee B.B."/>
            <person name="Newport G."/>
            <person name="Thorstenson Y.R."/>
            <person name="Agabian N."/>
            <person name="Magee P.T."/>
            <person name="Davis R.W."/>
            <person name="Scherer S."/>
        </authorList>
    </citation>
    <scope>NUCLEOTIDE SEQUENCE [LARGE SCALE GENOMIC DNA]</scope>
    <source>
        <strain>SC5314 / ATCC MYA-2876</strain>
    </source>
</reference>
<reference key="3">
    <citation type="journal article" date="2007" name="Genome Biol.">
        <title>Assembly of the Candida albicans genome into sixteen supercontigs aligned on the eight chromosomes.</title>
        <authorList>
            <person name="van het Hoog M."/>
            <person name="Rast T.J."/>
            <person name="Martchenko M."/>
            <person name="Grindle S."/>
            <person name="Dignard D."/>
            <person name="Hogues H."/>
            <person name="Cuomo C."/>
            <person name="Berriman M."/>
            <person name="Scherer S."/>
            <person name="Magee B.B."/>
            <person name="Whiteway M."/>
            <person name="Chibana H."/>
            <person name="Nantel A."/>
            <person name="Magee P.T."/>
        </authorList>
    </citation>
    <scope>GENOME REANNOTATION</scope>
    <source>
        <strain>SC5314 / ATCC MYA-2876</strain>
    </source>
</reference>
<reference key="4">
    <citation type="journal article" date="2013" name="Genome Biol.">
        <title>Assembly of a phased diploid Candida albicans genome facilitates allele-specific measurements and provides a simple model for repeat and indel structure.</title>
        <authorList>
            <person name="Muzzey D."/>
            <person name="Schwartz K."/>
            <person name="Weissman J.S."/>
            <person name="Sherlock G."/>
        </authorList>
    </citation>
    <scope>NUCLEOTIDE SEQUENCE [LARGE SCALE GENOMIC DNA]</scope>
    <scope>GENOME REANNOTATION</scope>
    <source>
        <strain>SC5314 / ATCC MYA-2876</strain>
    </source>
</reference>
<name>TYSY_CANAL</name>
<organism>
    <name type="scientific">Candida albicans (strain SC5314 / ATCC MYA-2876)</name>
    <name type="common">Yeast</name>
    <dbReference type="NCBI Taxonomy" id="237561"/>
    <lineage>
        <taxon>Eukaryota</taxon>
        <taxon>Fungi</taxon>
        <taxon>Dikarya</taxon>
        <taxon>Ascomycota</taxon>
        <taxon>Saccharomycotina</taxon>
        <taxon>Pichiomycetes</taxon>
        <taxon>Debaryomycetaceae</taxon>
        <taxon>Candida/Lodderomyces clade</taxon>
        <taxon>Candida</taxon>
    </lineage>
</organism>
<dbReference type="EC" id="2.1.1.45"/>
<dbReference type="EMBL" id="J04230">
    <property type="protein sequence ID" value="AAA34374.2"/>
    <property type="molecule type" value="Genomic_DNA"/>
</dbReference>
<dbReference type="EMBL" id="CP017624">
    <property type="protein sequence ID" value="AOW27536.1"/>
    <property type="molecule type" value="Genomic_DNA"/>
</dbReference>
<dbReference type="PIR" id="A32805">
    <property type="entry name" value="YXCKTA"/>
</dbReference>
<dbReference type="RefSeq" id="XP_714908.1">
    <property type="nucleotide sequence ID" value="XM_709815.1"/>
</dbReference>
<dbReference type="SMR" id="P12461"/>
<dbReference type="FunCoup" id="P12461">
    <property type="interactions" value="606"/>
</dbReference>
<dbReference type="STRING" id="237561.P12461"/>
<dbReference type="ChEMBL" id="CHEMBL2364680"/>
<dbReference type="DrugBank" id="DB03541">
    <property type="generic name" value="10-Propargyl-5,8-Dideazafolic Acid"/>
</dbReference>
<dbReference type="DrugBank" id="DB03274">
    <property type="generic name" value="2',5'-Dideoxyuridine"/>
</dbReference>
<dbReference type="DrugBank" id="DB03798">
    <property type="generic name" value="2'-Deoxycytidine-5'-Monophosphate"/>
</dbReference>
<dbReference type="DrugBank" id="DB04457">
    <property type="generic name" value="2'-Deoxyguanosine-5'-Monophosphate"/>
</dbReference>
<dbReference type="DrugBank" id="DB02256">
    <property type="generic name" value="2'-Deoxyuridine"/>
</dbReference>
<dbReference type="DrugBank" id="DB07577">
    <property type="generic name" value="2,4-Diamino-5-phenyl-6-ethylpyrimidine"/>
</dbReference>
<dbReference type="DrugBank" id="DB08204">
    <property type="generic name" value="3-DIPHENOL-6-NITRO-3H-BENZO[DE]ISOCHROMEN-1-ONE"/>
</dbReference>
<dbReference type="DrugBank" id="DB04696">
    <property type="generic name" value="4-CHLORO-3',3''-DIBROMOPHENOL-1,8-NAPHTHALEIN"/>
</dbReference>
<dbReference type="DrugBank" id="DB02301">
    <property type="generic name" value="5,10-Methylene-6-Hydrofolic Acid"/>
</dbReference>
<dbReference type="DrugBank" id="DB03761">
    <property type="generic name" value="5-fluoro-2'-deoxyuridine-5'-monophosphate"/>
</dbReference>
<dbReference type="DrugBank" id="DB01101">
    <property type="generic name" value="Capecitabine"/>
</dbReference>
<dbReference type="DrugBank" id="DB00537">
    <property type="generic name" value="Ciprofloxacin"/>
</dbReference>
<dbReference type="DrugBank" id="DB03800">
    <property type="generic name" value="Deoxyuridine monophosphate"/>
</dbReference>
<dbReference type="DrugBank" id="DB00322">
    <property type="generic name" value="Floxuridine"/>
</dbReference>
<dbReference type="DrugBank" id="DB01099">
    <property type="generic name" value="Flucytosine"/>
</dbReference>
<dbReference type="DrugBank" id="DB00544">
    <property type="generic name" value="Fluorouracil"/>
</dbReference>
<dbReference type="DrugBank" id="DB02235">
    <property type="generic name" value="L-methionine (R)-S-oxide"/>
</dbReference>
<dbReference type="DrugBank" id="DB02223">
    <property type="generic name" value="LY231514 tetra glu"/>
</dbReference>
<dbReference type="DrugBank" id="DB03038">
    <property type="generic name" value="LY341770"/>
</dbReference>
<dbReference type="DrugBank" id="DB03345">
    <property type="generic name" value="Mercaptoethanol"/>
</dbReference>
<dbReference type="DrugBank" id="DB03157">
    <property type="generic name" value="N,O-didansyl-L-tyrosine"/>
</dbReference>
<dbReference type="DrugBank" id="DB03818">
    <property type="generic name" value="N-[Tosyl-D-Prolinyl]Amino-Ethanethiol"/>
</dbReference>
<dbReference type="DrugBank" id="DB02899">
    <property type="generic name" value="N-Carboxymethionine"/>
</dbReference>
<dbReference type="DrugBank" id="DB12912">
    <property type="generic name" value="Nolatrexed"/>
</dbReference>
<dbReference type="DrugBank" id="DB04586">
    <property type="generic name" value="o-Bromophenol"/>
</dbReference>
<dbReference type="DrugBank" id="DB00642">
    <property type="generic name" value="Pemetrexed"/>
</dbReference>
<dbReference type="DrugBank" id="DB06163">
    <property type="generic name" value="Plevitrexed"/>
</dbReference>
<dbReference type="DrugBank" id="DB00293">
    <property type="generic name" value="Raltitrexed"/>
</dbReference>
<dbReference type="DrugBank" id="DB04530">
    <property type="generic name" value="S,S-(2-Hydroxyethyl)Thiocysteine"/>
</dbReference>
<dbReference type="DrugBank" id="DB04503">
    <property type="generic name" value="Sp-722"/>
</dbReference>
<dbReference type="DrugBank" id="DB03558">
    <property type="generic name" value="SP-876"/>
</dbReference>
<dbReference type="DrugBank" id="DB05116">
    <property type="generic name" value="Thymectacin"/>
</dbReference>
<dbReference type="DrugBank" id="DB01643">
    <property type="generic name" value="Thymidine monophosphate"/>
</dbReference>
<dbReference type="DrugBank" id="DB02752">
    <property type="generic name" value="Tosyl-D-Proline"/>
</dbReference>
<dbReference type="DrugBank" id="DB00432">
    <property type="generic name" value="Trifluridine"/>
</dbReference>
<dbReference type="DrugBank" id="DB03685">
    <property type="generic name" value="Uridine monophosphate"/>
</dbReference>
<dbReference type="DrugCentral" id="P12461"/>
<dbReference type="EnsemblFungi" id="C2_05190W_A-T">
    <property type="protein sequence ID" value="C2_05190W_A-T-p1"/>
    <property type="gene ID" value="C2_05190W_A"/>
</dbReference>
<dbReference type="GeneID" id="3643463"/>
<dbReference type="KEGG" id="cal:CAALFM_C205190WA"/>
<dbReference type="CGD" id="CAL0000189182">
    <property type="gene designation" value="CDC21"/>
</dbReference>
<dbReference type="VEuPathDB" id="FungiDB:C2_05190W_A"/>
<dbReference type="eggNOG" id="KOG0673">
    <property type="taxonomic scope" value="Eukaryota"/>
</dbReference>
<dbReference type="HOGENOM" id="CLU_021669_0_2_1"/>
<dbReference type="InParanoid" id="P12461"/>
<dbReference type="OMA" id="AYGRFWR"/>
<dbReference type="OrthoDB" id="766at2759"/>
<dbReference type="UniPathway" id="UPA00575"/>
<dbReference type="PRO" id="PR:P12461"/>
<dbReference type="Proteomes" id="UP000000559">
    <property type="component" value="Chromosome 2"/>
</dbReference>
<dbReference type="GO" id="GO:0005829">
    <property type="term" value="C:cytosol"/>
    <property type="evidence" value="ECO:0000318"/>
    <property type="project" value="GO_Central"/>
</dbReference>
<dbReference type="GO" id="GO:0062040">
    <property type="term" value="C:fungal biofilm matrix"/>
    <property type="evidence" value="ECO:0000314"/>
    <property type="project" value="CGD"/>
</dbReference>
<dbReference type="GO" id="GO:0005739">
    <property type="term" value="C:mitochondrion"/>
    <property type="evidence" value="ECO:0000318"/>
    <property type="project" value="GO_Central"/>
</dbReference>
<dbReference type="GO" id="GO:0010181">
    <property type="term" value="F:FMN binding"/>
    <property type="evidence" value="ECO:0007669"/>
    <property type="project" value="EnsemblFungi"/>
</dbReference>
<dbReference type="GO" id="GO:0004633">
    <property type="term" value="F:phosphopantothenoylcysteine decarboxylase activity"/>
    <property type="evidence" value="ECO:0007669"/>
    <property type="project" value="EnsemblFungi"/>
</dbReference>
<dbReference type="GO" id="GO:0004864">
    <property type="term" value="F:protein phosphatase inhibitor activity"/>
    <property type="evidence" value="ECO:0007669"/>
    <property type="project" value="EnsemblFungi"/>
</dbReference>
<dbReference type="GO" id="GO:0004799">
    <property type="term" value="F:thymidylate synthase activity"/>
    <property type="evidence" value="ECO:0000318"/>
    <property type="project" value="GO_Central"/>
</dbReference>
<dbReference type="GO" id="GO:0006231">
    <property type="term" value="P:dTMP biosynthetic process"/>
    <property type="evidence" value="ECO:0000318"/>
    <property type="project" value="GO_Central"/>
</dbReference>
<dbReference type="GO" id="GO:0006235">
    <property type="term" value="P:dTTP biosynthetic process"/>
    <property type="evidence" value="ECO:0007669"/>
    <property type="project" value="UniProtKB-UniPathway"/>
</dbReference>
<dbReference type="GO" id="GO:0032259">
    <property type="term" value="P:methylation"/>
    <property type="evidence" value="ECO:0007669"/>
    <property type="project" value="UniProtKB-KW"/>
</dbReference>
<dbReference type="CDD" id="cd00351">
    <property type="entry name" value="TS_Pyrimidine_HMase"/>
    <property type="match status" value="1"/>
</dbReference>
<dbReference type="FunFam" id="3.30.572.10:FF:000005">
    <property type="entry name" value="Thymidylate synthase"/>
    <property type="match status" value="1"/>
</dbReference>
<dbReference type="Gene3D" id="3.30.572.10">
    <property type="entry name" value="Thymidylate synthase/dCMP hydroxymethylase domain"/>
    <property type="match status" value="1"/>
</dbReference>
<dbReference type="HAMAP" id="MF_00008">
    <property type="entry name" value="Thymidy_synth_bact"/>
    <property type="match status" value="1"/>
</dbReference>
<dbReference type="InterPro" id="IPR045097">
    <property type="entry name" value="Thymidate_synth/dCMP_Mease"/>
</dbReference>
<dbReference type="InterPro" id="IPR023451">
    <property type="entry name" value="Thymidate_synth/dCMP_Mease_dom"/>
</dbReference>
<dbReference type="InterPro" id="IPR036926">
    <property type="entry name" value="Thymidate_synth/dCMP_Mease_sf"/>
</dbReference>
<dbReference type="InterPro" id="IPR000398">
    <property type="entry name" value="Thymidylate_synthase"/>
</dbReference>
<dbReference type="InterPro" id="IPR020940">
    <property type="entry name" value="Thymidylate_synthase_AS"/>
</dbReference>
<dbReference type="NCBIfam" id="NF002497">
    <property type="entry name" value="PRK01827.1-3"/>
    <property type="match status" value="1"/>
</dbReference>
<dbReference type="NCBIfam" id="TIGR03284">
    <property type="entry name" value="thym_sym"/>
    <property type="match status" value="1"/>
</dbReference>
<dbReference type="PANTHER" id="PTHR11548:SF2">
    <property type="entry name" value="THYMIDYLATE SYNTHASE"/>
    <property type="match status" value="1"/>
</dbReference>
<dbReference type="PANTHER" id="PTHR11548">
    <property type="entry name" value="THYMIDYLATE SYNTHASE 1"/>
    <property type="match status" value="1"/>
</dbReference>
<dbReference type="Pfam" id="PF00303">
    <property type="entry name" value="Thymidylat_synt"/>
    <property type="match status" value="1"/>
</dbReference>
<dbReference type="PRINTS" id="PR00108">
    <property type="entry name" value="THYMDSNTHASE"/>
</dbReference>
<dbReference type="SUPFAM" id="SSF55831">
    <property type="entry name" value="Thymidylate synthase/dCMP hydroxymethylase"/>
    <property type="match status" value="1"/>
</dbReference>
<dbReference type="PROSITE" id="PS00091">
    <property type="entry name" value="THYMIDYLATE_SYNTHASE"/>
    <property type="match status" value="1"/>
</dbReference>
<sequence>MTVSPNTAEQAYLDLCKRIIDEGEHRPDRTGTGTKSLFAPPQLRFDLSNDTFPLLTTKKVFSKGIIHELLWFVAGSTDAKILSEKGVKIWEGNGSREFLDKLGLTHRREGDLGPVYGFQWRHFGAEYKDCDSDYTGQGFDQLQDVIKKLKTNPYDRRIIMSAWNPPDFAKMALPPCHVFCQFYVNFPTSSPDPNNPKQAKTAKPKLSCLLYQRSCDMGLGVPFNIASYALLTKMIAHVVDMDCGEFIHTLGDAHVYLDHIDALKEQFERIPKQFPKLVIKEERKNEIKSIDDFKFEDFEIVGYEPYPPIKMKMSV</sequence>
<protein>
    <recommendedName>
        <fullName>Thymidylate synthase</fullName>
        <shortName>TS</shortName>
        <shortName>TSase</shortName>
        <ecNumber>2.1.1.45</ecNumber>
    </recommendedName>
</protein>
<keyword id="KW-0489">Methyltransferase</keyword>
<keyword id="KW-0545">Nucleotide biosynthesis</keyword>
<keyword id="KW-1185">Reference proteome</keyword>
<keyword id="KW-0808">Transferase</keyword>